<organism>
    <name type="scientific">Pyrococcus furiosus (strain ATCC 43587 / DSM 3638 / JCM 8422 / Vc1)</name>
    <dbReference type="NCBI Taxonomy" id="186497"/>
    <lineage>
        <taxon>Archaea</taxon>
        <taxon>Methanobacteriati</taxon>
        <taxon>Methanobacteriota</taxon>
        <taxon>Thermococci</taxon>
        <taxon>Thermococcales</taxon>
        <taxon>Thermococcaceae</taxon>
        <taxon>Pyrococcus</taxon>
    </lineage>
</organism>
<name>METK_PYRFU</name>
<sequence length="401" mass="44281">MARNIVVEEIVRTPVEMQQVELVERKGIGHPDSIADGIAEAVSRALCREYIRRYGVILHHNTDQVEVVGGRAYPRFGGGEVVKPIYILLSGRAVELVDQELFPVHEVAIKAAKNYLKNAIRHLDVENHVIIDSRIGQGSVDLVSVFNKARENPIPLANDTSFGVGYAPLSETERLVLETEKLLNSEKFKKEYPAVGEDIKVMGLRRGNEIDLTIAAAIVDSEVATPKEYLEVKDKIKEAVEELAKEITSRKVNIYVNTADDPERGIYYITVTGTSAEAGDDGSVGRGNRVNGLITPNRHMSMEAAAGKNPVSHVGKIYNILAMLIAEDIAKTLPVEEVYVRILSQIGKPIDQPLVASIQVIPKPGHSVKEFEKDAYSIADEWLANITKVQKMILEDKISVF</sequence>
<evidence type="ECO:0000255" key="1">
    <source>
        <dbReference type="HAMAP-Rule" id="MF_00136"/>
    </source>
</evidence>
<evidence type="ECO:0007829" key="2">
    <source>
        <dbReference type="PDB" id="6S81"/>
    </source>
</evidence>
<evidence type="ECO:0007829" key="3">
    <source>
        <dbReference type="PDB" id="6S83"/>
    </source>
</evidence>
<protein>
    <recommendedName>
        <fullName evidence="1">S-adenosylmethionine synthase</fullName>
        <shortName evidence="1">AdoMet synthase</shortName>
        <ecNumber evidence="1">2.5.1.6</ecNumber>
    </recommendedName>
    <alternativeName>
        <fullName evidence="1">Methionine adenosyltransferase</fullName>
    </alternativeName>
</protein>
<gene>
    <name evidence="1" type="primary">mat</name>
    <name type="ordered locus">PF1866</name>
</gene>
<comment type="function">
    <text evidence="1">Catalyzes the formation of S-adenosylmethionine from methionine and ATP.</text>
</comment>
<comment type="catalytic activity">
    <reaction evidence="1">
        <text>L-methionine + ATP + H2O = S-adenosyl-L-methionine + phosphate + diphosphate</text>
        <dbReference type="Rhea" id="RHEA:21080"/>
        <dbReference type="ChEBI" id="CHEBI:15377"/>
        <dbReference type="ChEBI" id="CHEBI:30616"/>
        <dbReference type="ChEBI" id="CHEBI:33019"/>
        <dbReference type="ChEBI" id="CHEBI:43474"/>
        <dbReference type="ChEBI" id="CHEBI:57844"/>
        <dbReference type="ChEBI" id="CHEBI:59789"/>
        <dbReference type="EC" id="2.5.1.6"/>
    </reaction>
</comment>
<comment type="cofactor">
    <cofactor evidence="1">
        <name>Mg(2+)</name>
        <dbReference type="ChEBI" id="CHEBI:18420"/>
    </cofactor>
</comment>
<comment type="pathway">
    <text evidence="1">Amino-acid biosynthesis; S-adenosyl-L-methionine biosynthesis; S-adenosyl-L-methionine from L-methionine: step 1/1.</text>
</comment>
<comment type="similarity">
    <text evidence="1">Belongs to the AdoMet synthase 2 family.</text>
</comment>
<feature type="chain" id="PRO_0000150037" description="S-adenosylmethionine synthase">
    <location>
        <begin position="1"/>
        <end position="401"/>
    </location>
</feature>
<feature type="binding site" evidence="1">
    <location>
        <begin position="136"/>
        <end position="141"/>
    </location>
    <ligand>
        <name>ATP</name>
        <dbReference type="ChEBI" id="CHEBI:30616"/>
    </ligand>
</feature>
<feature type="strand" evidence="2">
    <location>
        <begin position="5"/>
        <end position="9"/>
    </location>
</feature>
<feature type="helix" evidence="2">
    <location>
        <begin position="15"/>
        <end position="17"/>
    </location>
</feature>
<feature type="strand" evidence="2">
    <location>
        <begin position="18"/>
        <end position="26"/>
    </location>
</feature>
<feature type="helix" evidence="2">
    <location>
        <begin position="31"/>
        <end position="54"/>
    </location>
</feature>
<feature type="strand" evidence="2">
    <location>
        <begin position="60"/>
        <end position="68"/>
    </location>
</feature>
<feature type="strand" evidence="2">
    <location>
        <begin position="71"/>
        <end position="73"/>
    </location>
</feature>
<feature type="strand" evidence="2">
    <location>
        <begin position="80"/>
        <end position="83"/>
    </location>
</feature>
<feature type="strand" evidence="2">
    <location>
        <begin position="85"/>
        <end position="97"/>
    </location>
</feature>
<feature type="helix" evidence="2">
    <location>
        <begin position="104"/>
        <end position="119"/>
    </location>
</feature>
<feature type="helix" evidence="2">
    <location>
        <begin position="125"/>
        <end position="128"/>
    </location>
</feature>
<feature type="strand" evidence="2">
    <location>
        <begin position="129"/>
        <end position="133"/>
    </location>
</feature>
<feature type="strand" evidence="2">
    <location>
        <begin position="136"/>
        <end position="140"/>
    </location>
</feature>
<feature type="helix" evidence="2">
    <location>
        <begin position="143"/>
        <end position="151"/>
    </location>
</feature>
<feature type="strand" evidence="3">
    <location>
        <begin position="156"/>
        <end position="159"/>
    </location>
</feature>
<feature type="strand" evidence="2">
    <location>
        <begin position="162"/>
        <end position="168"/>
    </location>
</feature>
<feature type="helix" evidence="2">
    <location>
        <begin position="171"/>
        <end position="183"/>
    </location>
</feature>
<feature type="helix" evidence="2">
    <location>
        <begin position="186"/>
        <end position="191"/>
    </location>
</feature>
<feature type="strand" evidence="2">
    <location>
        <begin position="195"/>
        <end position="206"/>
    </location>
</feature>
<feature type="strand" evidence="2">
    <location>
        <begin position="209"/>
        <end position="219"/>
    </location>
</feature>
<feature type="helix" evidence="2">
    <location>
        <begin position="220"/>
        <end position="222"/>
    </location>
</feature>
<feature type="helix" evidence="2">
    <location>
        <begin position="226"/>
        <end position="247"/>
    </location>
</feature>
<feature type="strand" evidence="2">
    <location>
        <begin position="249"/>
        <end position="256"/>
    </location>
</feature>
<feature type="helix" evidence="2">
    <location>
        <begin position="262"/>
        <end position="264"/>
    </location>
</feature>
<feature type="strand" evidence="2">
    <location>
        <begin position="269"/>
        <end position="274"/>
    </location>
</feature>
<feature type="helix" evidence="2">
    <location>
        <begin position="275"/>
        <end position="278"/>
    </location>
</feature>
<feature type="turn" evidence="2">
    <location>
        <begin position="310"/>
        <end position="312"/>
    </location>
</feature>
<feature type="helix" evidence="2">
    <location>
        <begin position="314"/>
        <end position="332"/>
    </location>
</feature>
<feature type="strand" evidence="2">
    <location>
        <begin position="335"/>
        <end position="343"/>
    </location>
</feature>
<feature type="strand" evidence="2">
    <location>
        <begin position="354"/>
        <end position="362"/>
    </location>
</feature>
<feature type="helix" evidence="2">
    <location>
        <begin position="368"/>
        <end position="370"/>
    </location>
</feature>
<feature type="helix" evidence="2">
    <location>
        <begin position="372"/>
        <end position="384"/>
    </location>
</feature>
<feature type="helix" evidence="2">
    <location>
        <begin position="386"/>
        <end position="394"/>
    </location>
</feature>
<keyword id="KW-0002">3D-structure</keyword>
<keyword id="KW-0067">ATP-binding</keyword>
<keyword id="KW-0460">Magnesium</keyword>
<keyword id="KW-0547">Nucleotide-binding</keyword>
<keyword id="KW-0554">One-carbon metabolism</keyword>
<keyword id="KW-1185">Reference proteome</keyword>
<keyword id="KW-0808">Transferase</keyword>
<reference key="1">
    <citation type="journal article" date="1999" name="Genetics">
        <title>Divergence of the hyperthermophilic archaea Pyrococcus furiosus and P. horikoshii inferred from complete genomic sequences.</title>
        <authorList>
            <person name="Maeder D.L."/>
            <person name="Weiss R.B."/>
            <person name="Dunn D.M."/>
            <person name="Cherry J.L."/>
            <person name="Gonzalez J.M."/>
            <person name="DiRuggiero J."/>
            <person name="Robb F.T."/>
        </authorList>
    </citation>
    <scope>NUCLEOTIDE SEQUENCE [LARGE SCALE GENOMIC DNA]</scope>
    <source>
        <strain>ATCC 43587 / DSM 3638 / JCM 8422 / Vc1</strain>
    </source>
</reference>
<accession>Q8TZW1</accession>
<proteinExistence type="evidence at protein level"/>
<dbReference type="EC" id="2.5.1.6" evidence="1"/>
<dbReference type="EMBL" id="AE009950">
    <property type="protein sequence ID" value="AAL81990.1"/>
    <property type="molecule type" value="Genomic_DNA"/>
</dbReference>
<dbReference type="RefSeq" id="WP_011013005.1">
    <property type="nucleotide sequence ID" value="NZ_CP023154.1"/>
</dbReference>
<dbReference type="PDB" id="6S81">
    <property type="method" value="X-ray"/>
    <property type="resolution" value="1.78 A"/>
    <property type="chains" value="A/B/C/D=1-401"/>
</dbReference>
<dbReference type="PDB" id="6S83">
    <property type="method" value="X-ray"/>
    <property type="resolution" value="2.34 A"/>
    <property type="chains" value="A/B/C/D/E/F/G/H=1-401"/>
</dbReference>
<dbReference type="PDBsum" id="6S81"/>
<dbReference type="PDBsum" id="6S83"/>
<dbReference type="SMR" id="Q8TZW1"/>
<dbReference type="STRING" id="186497.PF1866"/>
<dbReference type="PaxDb" id="186497-PF1866"/>
<dbReference type="KEGG" id="pfu:PF1866"/>
<dbReference type="PATRIC" id="fig|186497.12.peg.1936"/>
<dbReference type="eggNOG" id="arCOG01678">
    <property type="taxonomic scope" value="Archaea"/>
</dbReference>
<dbReference type="HOGENOM" id="CLU_057642_0_0_2"/>
<dbReference type="OrthoDB" id="204488at2157"/>
<dbReference type="PhylomeDB" id="Q8TZW1"/>
<dbReference type="BRENDA" id="2.5.1.6">
    <property type="organism ID" value="5243"/>
</dbReference>
<dbReference type="UniPathway" id="UPA00315">
    <property type="reaction ID" value="UER00080"/>
</dbReference>
<dbReference type="Proteomes" id="UP000001013">
    <property type="component" value="Chromosome"/>
</dbReference>
<dbReference type="GO" id="GO:0005524">
    <property type="term" value="F:ATP binding"/>
    <property type="evidence" value="ECO:0007669"/>
    <property type="project" value="UniProtKB-UniRule"/>
</dbReference>
<dbReference type="GO" id="GO:0000287">
    <property type="term" value="F:magnesium ion binding"/>
    <property type="evidence" value="ECO:0007669"/>
    <property type="project" value="UniProtKB-UniRule"/>
</dbReference>
<dbReference type="GO" id="GO:0004478">
    <property type="term" value="F:methionine adenosyltransferase activity"/>
    <property type="evidence" value="ECO:0007669"/>
    <property type="project" value="UniProtKB-UniRule"/>
</dbReference>
<dbReference type="GO" id="GO:0006730">
    <property type="term" value="P:one-carbon metabolic process"/>
    <property type="evidence" value="ECO:0007669"/>
    <property type="project" value="UniProtKB-KW"/>
</dbReference>
<dbReference type="GO" id="GO:0006556">
    <property type="term" value="P:S-adenosylmethionine biosynthetic process"/>
    <property type="evidence" value="ECO:0007669"/>
    <property type="project" value="UniProtKB-UniRule"/>
</dbReference>
<dbReference type="Gene3D" id="3.30.300.10">
    <property type="match status" value="1"/>
</dbReference>
<dbReference type="Gene3D" id="3.30.300.280">
    <property type="entry name" value="S-adenosylmethionine synthetase, C-terminal domain"/>
    <property type="match status" value="2"/>
</dbReference>
<dbReference type="HAMAP" id="MF_00136">
    <property type="entry name" value="S_AdoMet_synth2"/>
    <property type="match status" value="1"/>
</dbReference>
<dbReference type="InterPro" id="IPR027790">
    <property type="entry name" value="AdoMet_synthase_2_family"/>
</dbReference>
<dbReference type="InterPro" id="IPR042544">
    <property type="entry name" value="AdoMet_synthase_3"/>
</dbReference>
<dbReference type="InterPro" id="IPR002795">
    <property type="entry name" value="S-AdoMet_synthetase_arc"/>
</dbReference>
<dbReference type="NCBIfam" id="NF003364">
    <property type="entry name" value="PRK04439.1-3"/>
    <property type="match status" value="1"/>
</dbReference>
<dbReference type="NCBIfam" id="NF003366">
    <property type="entry name" value="PRK04439.1-5"/>
    <property type="match status" value="1"/>
</dbReference>
<dbReference type="PANTHER" id="PTHR36697">
    <property type="entry name" value="S-ADENOSYLMETHIONINE SYNTHASE"/>
    <property type="match status" value="1"/>
</dbReference>
<dbReference type="PANTHER" id="PTHR36697:SF1">
    <property type="entry name" value="S-ADENOSYLMETHIONINE SYNTHASE"/>
    <property type="match status" value="1"/>
</dbReference>
<dbReference type="Pfam" id="PF01941">
    <property type="entry name" value="AdoMet_Synthase"/>
    <property type="match status" value="1"/>
</dbReference>